<organismHost>
    <name type="scientific">Orgyia pseudotsugata</name>
    <name type="common">Douglas-fir tussock moth</name>
    <dbReference type="NCBI Taxonomy" id="33414"/>
</organismHost>
<dbReference type="EMBL" id="U75930">
    <property type="protein sequence ID" value="AAC59137.1"/>
    <property type="molecule type" value="Genomic_DNA"/>
</dbReference>
<dbReference type="RefSeq" id="NP_046294.1">
    <property type="nucleotide sequence ID" value="NC_001875.2"/>
</dbReference>
<dbReference type="KEGG" id="vg:911981"/>
<dbReference type="OrthoDB" id="14620at10239"/>
<dbReference type="Proteomes" id="UP000009248">
    <property type="component" value="Genome"/>
</dbReference>
<dbReference type="GO" id="GO:0008270">
    <property type="term" value="F:zinc ion binding"/>
    <property type="evidence" value="ECO:0007669"/>
    <property type="project" value="UniProtKB-KW"/>
</dbReference>
<dbReference type="InterPro" id="IPR007954">
    <property type="entry name" value="Baculo_IE-1"/>
</dbReference>
<dbReference type="InterPro" id="IPR001841">
    <property type="entry name" value="Znf_RING"/>
</dbReference>
<dbReference type="Pfam" id="PF05290">
    <property type="entry name" value="Baculo_IE-1"/>
    <property type="match status" value="1"/>
</dbReference>
<dbReference type="SUPFAM" id="SSF57850">
    <property type="entry name" value="RING/U-box"/>
    <property type="match status" value="1"/>
</dbReference>
<dbReference type="PROSITE" id="PS50089">
    <property type="entry name" value="ZF_RING_2"/>
    <property type="match status" value="1"/>
</dbReference>
<feature type="chain" id="PRO_0000056362" description="Immediate-early protein IE-0">
    <location>
        <begin position="1"/>
        <end position="245"/>
    </location>
</feature>
<feature type="zinc finger region" description="RING-type" evidence="1">
    <location>
        <begin position="195"/>
        <end position="240"/>
    </location>
</feature>
<organism>
    <name type="scientific">Orgyia pseudotsugata multicapsid polyhedrosis virus</name>
    <name type="common">OpMNPV</name>
    <dbReference type="NCBI Taxonomy" id="262177"/>
    <lineage>
        <taxon>Viruses</taxon>
        <taxon>Viruses incertae sedis</taxon>
        <taxon>Naldaviricetes</taxon>
        <taxon>Lefavirales</taxon>
        <taxon>Baculoviridae</taxon>
        <taxon>Alphabaculovirus</taxon>
        <taxon>Alphabaculovirus orpseudotsugatae</taxon>
    </lineage>
</organism>
<name>IE0_NPVOP</name>
<protein>
    <recommendedName>
        <fullName>Immediate-early protein IE-0</fullName>
        <shortName>Immediate early 0 protein</shortName>
    </recommendedName>
    <alternativeName>
        <fullName>Immediate early transactivator 0</fullName>
    </alternativeName>
</protein>
<accession>O10369</accession>
<evidence type="ECO:0000255" key="1">
    <source>
        <dbReference type="PROSITE-ProRule" id="PRU00175"/>
    </source>
</evidence>
<proteinExistence type="predicted"/>
<keyword id="KW-0244">Early protein</keyword>
<keyword id="KW-0479">Metal-binding</keyword>
<keyword id="KW-1185">Reference proteome</keyword>
<keyword id="KW-0862">Zinc</keyword>
<keyword id="KW-0863">Zinc-finger</keyword>
<reference key="1">
    <citation type="journal article" date="1997" name="Virology">
        <title>The sequence of the Orgyia pseudotsugata multinucleocapsid nuclear polyhedrosis virus genome.</title>
        <authorList>
            <person name="Ahrens C.H."/>
            <person name="Russell R.R."/>
            <person name="Funk C.J."/>
            <person name="Evans J."/>
            <person name="Harwood S."/>
            <person name="Rohrmann G.F."/>
        </authorList>
    </citation>
    <scope>NUCLEOTIDE SEQUENCE [LARGE SCALE GENOMIC DNA]</scope>
</reference>
<sequence length="245" mass="27117">MIKGTHWPNLVSKSYTDACETSKVMDFNFIFAHMYCADMSTDGKLQAGVRAAAFGLVDDKHFELYKRRIENALFRYRDQCDGNAAPPARLSDNGDCCHHFVRDAARVVESIKSVEATSVGINVIVLLPYLKQLQIALKMLSDAFACCAKTIGGLQMYVQDLLSHCLLYADRVEAAGRALQVMNLFLNSGGPLYECDLCKEASADPRFLKPKECCQYSLCYACCVALWKTASTHAKCPACSTSFKS</sequence>
<gene>
    <name type="primary">IE-0</name>
    <name type="ORF">ORF138</name>
</gene>